<accession>Q97ZX2</accession>
<gene>
    <name type="primary">alaXM</name>
    <name type="ordered locus">SSO0450</name>
</gene>
<organism>
    <name type="scientific">Saccharolobus solfataricus (strain ATCC 35092 / DSM 1617 / JCM 11322 / P2)</name>
    <name type="common">Sulfolobus solfataricus</name>
    <dbReference type="NCBI Taxonomy" id="273057"/>
    <lineage>
        <taxon>Archaea</taxon>
        <taxon>Thermoproteota</taxon>
        <taxon>Thermoprotei</taxon>
        <taxon>Sulfolobales</taxon>
        <taxon>Sulfolobaceae</taxon>
        <taxon>Saccharolobus</taxon>
    </lineage>
</organism>
<proteinExistence type="evidence at protein level"/>
<evidence type="ECO:0000250" key="1"/>
<evidence type="ECO:0000269" key="2">
    <source>
    </source>
</evidence>
<evidence type="ECO:0000305" key="3"/>
<protein>
    <recommendedName>
        <fullName>Alanyl-tRNA editing protein AlaX-M</fullName>
        <shortName>AlaX-M</shortName>
    </recommendedName>
    <alternativeName>
        <fullName>Alanyl-tRNA deacylase AlaX-M</fullName>
    </alternativeName>
</protein>
<feature type="chain" id="PRO_0000391649" description="Alanyl-tRNA editing protein AlaX-M">
    <location>
        <begin position="1"/>
        <end position="236"/>
    </location>
</feature>
<feature type="binding site" evidence="1">
    <location>
        <position position="101"/>
    </location>
    <ligand>
        <name>Zn(2+)</name>
        <dbReference type="ChEBI" id="CHEBI:29105"/>
    </ligand>
</feature>
<feature type="binding site" evidence="1">
    <location>
        <position position="105"/>
    </location>
    <ligand>
        <name>Zn(2+)</name>
        <dbReference type="ChEBI" id="CHEBI:29105"/>
    </ligand>
</feature>
<feature type="binding site" evidence="1">
    <location>
        <position position="205"/>
    </location>
    <ligand>
        <name>Zn(2+)</name>
        <dbReference type="ChEBI" id="CHEBI:29105"/>
    </ligand>
</feature>
<sequence length="236" mass="26710">MTEELYLKDSYIKEFEGRVVRIEGNYVILDKTAFYPGGGGLDNDTGFLVNEKGERISVTEVKRGENGEILHKIDQNGSLNVNEKVIGTIDWDRRYRMMRLHTASHIVAALAYRKFGALITGGHISPEQAKDDFNVENKDTLIELINEANEIIKKDIELKIYFLPREEALMIPAIVKLAGRNPPQIPIWRIVEIPGIDIQADGGPHVKNTKEIGEIVLLKVENKGKGRKRVYYTVKP</sequence>
<reference key="1">
    <citation type="journal article" date="2001" name="Proc. Natl. Acad. Sci. U.S.A.">
        <title>The complete genome of the crenarchaeon Sulfolobus solfataricus P2.</title>
        <authorList>
            <person name="She Q."/>
            <person name="Singh R.K."/>
            <person name="Confalonieri F."/>
            <person name="Zivanovic Y."/>
            <person name="Allard G."/>
            <person name="Awayez M.J."/>
            <person name="Chan-Weiher C.C.-Y."/>
            <person name="Clausen I.G."/>
            <person name="Curtis B.A."/>
            <person name="De Moors A."/>
            <person name="Erauso G."/>
            <person name="Fletcher C."/>
            <person name="Gordon P.M.K."/>
            <person name="Heikamp-de Jong I."/>
            <person name="Jeffries A.C."/>
            <person name="Kozera C.J."/>
            <person name="Medina N."/>
            <person name="Peng X."/>
            <person name="Thi-Ngoc H.P."/>
            <person name="Redder P."/>
            <person name="Schenk M.E."/>
            <person name="Theriault C."/>
            <person name="Tolstrup N."/>
            <person name="Charlebois R.L."/>
            <person name="Doolittle W.F."/>
            <person name="Duguet M."/>
            <person name="Gaasterland T."/>
            <person name="Garrett R.A."/>
            <person name="Ragan M.A."/>
            <person name="Sensen C.W."/>
            <person name="Van der Oost J."/>
        </authorList>
    </citation>
    <scope>NUCLEOTIDE SEQUENCE [LARGE SCALE GENOMIC DNA]</scope>
    <source>
        <strain>ATCC 35092 / DSM 1617 / JCM 11322 / P2</strain>
    </source>
</reference>
<reference key="2">
    <citation type="journal article" date="2003" name="Proc. Natl. Acad. Sci. U.S.A.">
        <title>Trans-editing of mischarged tRNAs.</title>
        <authorList>
            <person name="Ahel I."/>
            <person name="Korencic D."/>
            <person name="Ibba M."/>
            <person name="Soll D."/>
        </authorList>
    </citation>
    <scope>FUNCTION AS TRNA(ALA) EDITING PROTEIN</scope>
</reference>
<keyword id="KW-0963">Cytoplasm</keyword>
<keyword id="KW-0479">Metal-binding</keyword>
<keyword id="KW-1185">Reference proteome</keyword>
<keyword id="KW-0862">Zinc</keyword>
<comment type="function">
    <text evidence="2">Functions in trans to edit the amino acid moiety from incorrectly charged Ser-tRNA(Ala).</text>
</comment>
<comment type="cofactor">
    <cofactor evidence="1">
        <name>Zn(2+)</name>
        <dbReference type="ChEBI" id="CHEBI:29105"/>
    </cofactor>
    <text evidence="1">Binds 1 zinc ion per subunit.</text>
</comment>
<comment type="subcellular location">
    <subcellularLocation>
        <location evidence="3">Cytoplasm</location>
    </subcellularLocation>
</comment>
<comment type="similarity">
    <text evidence="3">Belongs to the class-II aminoacyl-tRNA synthetase family. Editing domain AlaX-M subfamily.</text>
</comment>
<dbReference type="EMBL" id="AE006641">
    <property type="protein sequence ID" value="AAK40776.1"/>
    <property type="molecule type" value="Genomic_DNA"/>
</dbReference>
<dbReference type="PIR" id="A90190">
    <property type="entry name" value="A90190"/>
</dbReference>
<dbReference type="RefSeq" id="WP_009988710.1">
    <property type="nucleotide sequence ID" value="NC_002754.1"/>
</dbReference>
<dbReference type="SMR" id="Q97ZX2"/>
<dbReference type="FunCoup" id="Q97ZX2">
    <property type="interactions" value="108"/>
</dbReference>
<dbReference type="STRING" id="273057.SSO0450"/>
<dbReference type="PaxDb" id="273057-SSO0450"/>
<dbReference type="EnsemblBacteria" id="AAK40776">
    <property type="protein sequence ID" value="AAK40776"/>
    <property type="gene ID" value="SSO0450"/>
</dbReference>
<dbReference type="GeneID" id="44129432"/>
<dbReference type="KEGG" id="sso:SSO0450"/>
<dbReference type="PATRIC" id="fig|273057.12.peg.444"/>
<dbReference type="eggNOG" id="arCOG01254">
    <property type="taxonomic scope" value="Archaea"/>
</dbReference>
<dbReference type="HOGENOM" id="CLU_004485_3_2_2"/>
<dbReference type="InParanoid" id="Q97ZX2"/>
<dbReference type="PhylomeDB" id="Q97ZX2"/>
<dbReference type="Proteomes" id="UP000001974">
    <property type="component" value="Chromosome"/>
</dbReference>
<dbReference type="GO" id="GO:0005737">
    <property type="term" value="C:cytoplasm"/>
    <property type="evidence" value="ECO:0007669"/>
    <property type="project" value="UniProtKB-SubCell"/>
</dbReference>
<dbReference type="GO" id="GO:0004813">
    <property type="term" value="F:alanine-tRNA ligase activity"/>
    <property type="evidence" value="ECO:0007669"/>
    <property type="project" value="InterPro"/>
</dbReference>
<dbReference type="GO" id="GO:0002161">
    <property type="term" value="F:aminoacyl-tRNA deacylase activity"/>
    <property type="evidence" value="ECO:0000314"/>
    <property type="project" value="UniProtKB"/>
</dbReference>
<dbReference type="GO" id="GO:0005524">
    <property type="term" value="F:ATP binding"/>
    <property type="evidence" value="ECO:0007669"/>
    <property type="project" value="InterPro"/>
</dbReference>
<dbReference type="GO" id="GO:0046872">
    <property type="term" value="F:metal ion binding"/>
    <property type="evidence" value="ECO:0007669"/>
    <property type="project" value="UniProtKB-KW"/>
</dbReference>
<dbReference type="GO" id="GO:0003676">
    <property type="term" value="F:nucleic acid binding"/>
    <property type="evidence" value="ECO:0007669"/>
    <property type="project" value="InterPro"/>
</dbReference>
<dbReference type="GO" id="GO:0006419">
    <property type="term" value="P:alanyl-tRNA aminoacylation"/>
    <property type="evidence" value="ECO:0007669"/>
    <property type="project" value="InterPro"/>
</dbReference>
<dbReference type="FunFam" id="2.40.30.130:FF:000010">
    <property type="entry name" value="Alanine--tRNA ligase"/>
    <property type="match status" value="1"/>
</dbReference>
<dbReference type="Gene3D" id="2.40.30.130">
    <property type="match status" value="1"/>
</dbReference>
<dbReference type="Gene3D" id="3.30.980.10">
    <property type="entry name" value="Threonyl-trna Synthetase, Chain A, domain 2"/>
    <property type="match status" value="1"/>
</dbReference>
<dbReference type="InterPro" id="IPR018165">
    <property type="entry name" value="Ala-tRNA-synth_IIc_core"/>
</dbReference>
<dbReference type="InterPro" id="IPR018164">
    <property type="entry name" value="Ala-tRNA-synth_IIc_N"/>
</dbReference>
<dbReference type="InterPro" id="IPR053424">
    <property type="entry name" value="Alanyl-tRNA_Edit-Domain"/>
</dbReference>
<dbReference type="InterPro" id="IPR051335">
    <property type="entry name" value="Alanyl-tRNA_Editing_Enzymes"/>
</dbReference>
<dbReference type="InterPro" id="IPR018163">
    <property type="entry name" value="Thr/Ala-tRNA-synth_IIc_edit"/>
</dbReference>
<dbReference type="InterPro" id="IPR009000">
    <property type="entry name" value="Transl_B-barrel_sf"/>
</dbReference>
<dbReference type="InterPro" id="IPR012947">
    <property type="entry name" value="tRNA_SAD"/>
</dbReference>
<dbReference type="NCBIfam" id="NF040865">
    <property type="entry name" value="a_tRNA_ed_AlaXM"/>
    <property type="match status" value="1"/>
</dbReference>
<dbReference type="PANTHER" id="PTHR43462">
    <property type="entry name" value="ALANYL-TRNA EDITING PROTEIN"/>
    <property type="match status" value="1"/>
</dbReference>
<dbReference type="PANTHER" id="PTHR43462:SF1">
    <property type="entry name" value="ALANYL-TRNA EDITING PROTEIN AARSD1"/>
    <property type="match status" value="1"/>
</dbReference>
<dbReference type="Pfam" id="PF01411">
    <property type="entry name" value="tRNA-synt_2c"/>
    <property type="match status" value="1"/>
</dbReference>
<dbReference type="Pfam" id="PF07973">
    <property type="entry name" value="tRNA_SAD"/>
    <property type="match status" value="1"/>
</dbReference>
<dbReference type="SMART" id="SM00863">
    <property type="entry name" value="tRNA_SAD"/>
    <property type="match status" value="1"/>
</dbReference>
<dbReference type="SUPFAM" id="SSF55186">
    <property type="entry name" value="ThrRS/AlaRS common domain"/>
    <property type="match status" value="1"/>
</dbReference>
<dbReference type="SUPFAM" id="SSF50447">
    <property type="entry name" value="Translation proteins"/>
    <property type="match status" value="1"/>
</dbReference>
<dbReference type="PROSITE" id="PS50860">
    <property type="entry name" value="AA_TRNA_LIGASE_II_ALA"/>
    <property type="match status" value="1"/>
</dbReference>
<name>ALAXM_SACS2</name>